<gene>
    <name evidence="1" type="primary">rpsC</name>
    <name type="ordered locus">VIBHAR_00736</name>
</gene>
<feature type="chain" id="PRO_0000323310" description="Small ribosomal subunit protein uS3">
    <location>
        <begin position="1"/>
        <end position="232"/>
    </location>
</feature>
<feature type="domain" description="KH type-2" evidence="1">
    <location>
        <begin position="39"/>
        <end position="107"/>
    </location>
</feature>
<feature type="region of interest" description="Disordered" evidence="2">
    <location>
        <begin position="213"/>
        <end position="232"/>
    </location>
</feature>
<organism>
    <name type="scientific">Vibrio campbellii (strain ATCC BAA-1116)</name>
    <dbReference type="NCBI Taxonomy" id="2902295"/>
    <lineage>
        <taxon>Bacteria</taxon>
        <taxon>Pseudomonadati</taxon>
        <taxon>Pseudomonadota</taxon>
        <taxon>Gammaproteobacteria</taxon>
        <taxon>Vibrionales</taxon>
        <taxon>Vibrionaceae</taxon>
        <taxon>Vibrio</taxon>
    </lineage>
</organism>
<reference key="1">
    <citation type="submission" date="2007-08" db="EMBL/GenBank/DDBJ databases">
        <authorList>
            <consortium name="The Vibrio harveyi Genome Sequencing Project"/>
            <person name="Bassler B."/>
            <person name="Clifton S.W."/>
            <person name="Fulton L."/>
            <person name="Delehaunty K."/>
            <person name="Fronick C."/>
            <person name="Harrison M."/>
            <person name="Markivic C."/>
            <person name="Fulton R."/>
            <person name="Tin-Wollam A.-M."/>
            <person name="Shah N."/>
            <person name="Pepin K."/>
            <person name="Nash W."/>
            <person name="Thiruvilangam P."/>
            <person name="Bhonagiri V."/>
            <person name="Waters C."/>
            <person name="Tu K.C."/>
            <person name="Irgon J."/>
            <person name="Wilson R.K."/>
        </authorList>
    </citation>
    <scope>NUCLEOTIDE SEQUENCE [LARGE SCALE GENOMIC DNA]</scope>
    <source>
        <strain>ATCC BAA-1116 / BB120</strain>
    </source>
</reference>
<proteinExistence type="inferred from homology"/>
<sequence length="232" mass="25622">MGQKVHPNGIRLGIVKPWNATWFANTKDFADNLDGDFKVRQFLTKELQKASLSRIVIERPAKSIRVTIHTARPGVVIGKKGEDVEKLRAAVAKIAGVPAQINIAEVRKPELDAQLVGDSIASQLERRVMFRRAMKRAVQNAMRLGAKGIKVEVSGRLGGAEIARSEWYREGRVPLHTLRADIDYATSSAHTQYGVIGIKTWIFKGEILGGMPAANAVEPKGDKPKKQRKGRK</sequence>
<accession>A7N0I3</accession>
<comment type="function">
    <text evidence="1">Binds the lower part of the 30S subunit head. Binds mRNA in the 70S ribosome, positioning it for translation.</text>
</comment>
<comment type="subunit">
    <text evidence="1">Part of the 30S ribosomal subunit. Forms a tight complex with proteins S10 and S14.</text>
</comment>
<comment type="similarity">
    <text evidence="1">Belongs to the universal ribosomal protein uS3 family.</text>
</comment>
<keyword id="KW-0687">Ribonucleoprotein</keyword>
<keyword id="KW-0689">Ribosomal protein</keyword>
<keyword id="KW-0694">RNA-binding</keyword>
<keyword id="KW-0699">rRNA-binding</keyword>
<protein>
    <recommendedName>
        <fullName evidence="1">Small ribosomal subunit protein uS3</fullName>
    </recommendedName>
    <alternativeName>
        <fullName evidence="3">30S ribosomal protein S3</fullName>
    </alternativeName>
</protein>
<evidence type="ECO:0000255" key="1">
    <source>
        <dbReference type="HAMAP-Rule" id="MF_01309"/>
    </source>
</evidence>
<evidence type="ECO:0000256" key="2">
    <source>
        <dbReference type="SAM" id="MobiDB-lite"/>
    </source>
</evidence>
<evidence type="ECO:0000305" key="3"/>
<name>RS3_VIBC1</name>
<dbReference type="EMBL" id="CP000789">
    <property type="protein sequence ID" value="ABU69737.1"/>
    <property type="molecule type" value="Genomic_DNA"/>
</dbReference>
<dbReference type="RefSeq" id="WP_005435080.1">
    <property type="nucleotide sequence ID" value="NC_022269.1"/>
</dbReference>
<dbReference type="SMR" id="A7N0I3"/>
<dbReference type="GeneID" id="83583117"/>
<dbReference type="KEGG" id="vha:VIBHAR_00736"/>
<dbReference type="PATRIC" id="fig|338187.25.peg.1878"/>
<dbReference type="Proteomes" id="UP000008152">
    <property type="component" value="Chromosome I"/>
</dbReference>
<dbReference type="GO" id="GO:0022627">
    <property type="term" value="C:cytosolic small ribosomal subunit"/>
    <property type="evidence" value="ECO:0007669"/>
    <property type="project" value="TreeGrafter"/>
</dbReference>
<dbReference type="GO" id="GO:0003729">
    <property type="term" value="F:mRNA binding"/>
    <property type="evidence" value="ECO:0007669"/>
    <property type="project" value="UniProtKB-UniRule"/>
</dbReference>
<dbReference type="GO" id="GO:0019843">
    <property type="term" value="F:rRNA binding"/>
    <property type="evidence" value="ECO:0007669"/>
    <property type="project" value="UniProtKB-UniRule"/>
</dbReference>
<dbReference type="GO" id="GO:0003735">
    <property type="term" value="F:structural constituent of ribosome"/>
    <property type="evidence" value="ECO:0007669"/>
    <property type="project" value="InterPro"/>
</dbReference>
<dbReference type="GO" id="GO:0006412">
    <property type="term" value="P:translation"/>
    <property type="evidence" value="ECO:0007669"/>
    <property type="project" value="UniProtKB-UniRule"/>
</dbReference>
<dbReference type="CDD" id="cd02412">
    <property type="entry name" value="KH-II_30S_S3"/>
    <property type="match status" value="1"/>
</dbReference>
<dbReference type="FunFam" id="3.30.1140.32:FF:000001">
    <property type="entry name" value="30S ribosomal protein S3"/>
    <property type="match status" value="1"/>
</dbReference>
<dbReference type="FunFam" id="3.30.300.20:FF:000001">
    <property type="entry name" value="30S ribosomal protein S3"/>
    <property type="match status" value="1"/>
</dbReference>
<dbReference type="Gene3D" id="3.30.300.20">
    <property type="match status" value="1"/>
</dbReference>
<dbReference type="Gene3D" id="3.30.1140.32">
    <property type="entry name" value="Ribosomal protein S3, C-terminal domain"/>
    <property type="match status" value="1"/>
</dbReference>
<dbReference type="HAMAP" id="MF_01309_B">
    <property type="entry name" value="Ribosomal_uS3_B"/>
    <property type="match status" value="1"/>
</dbReference>
<dbReference type="InterPro" id="IPR004087">
    <property type="entry name" value="KH_dom"/>
</dbReference>
<dbReference type="InterPro" id="IPR015946">
    <property type="entry name" value="KH_dom-like_a/b"/>
</dbReference>
<dbReference type="InterPro" id="IPR004044">
    <property type="entry name" value="KH_dom_type_2"/>
</dbReference>
<dbReference type="InterPro" id="IPR009019">
    <property type="entry name" value="KH_sf_prok-type"/>
</dbReference>
<dbReference type="InterPro" id="IPR036419">
    <property type="entry name" value="Ribosomal_S3_C_sf"/>
</dbReference>
<dbReference type="InterPro" id="IPR005704">
    <property type="entry name" value="Ribosomal_uS3_bac-typ"/>
</dbReference>
<dbReference type="InterPro" id="IPR001351">
    <property type="entry name" value="Ribosomal_uS3_C"/>
</dbReference>
<dbReference type="InterPro" id="IPR018280">
    <property type="entry name" value="Ribosomal_uS3_CS"/>
</dbReference>
<dbReference type="NCBIfam" id="TIGR01009">
    <property type="entry name" value="rpsC_bact"/>
    <property type="match status" value="1"/>
</dbReference>
<dbReference type="PANTHER" id="PTHR11760">
    <property type="entry name" value="30S/40S RIBOSOMAL PROTEIN S3"/>
    <property type="match status" value="1"/>
</dbReference>
<dbReference type="PANTHER" id="PTHR11760:SF19">
    <property type="entry name" value="SMALL RIBOSOMAL SUBUNIT PROTEIN US3C"/>
    <property type="match status" value="1"/>
</dbReference>
<dbReference type="Pfam" id="PF07650">
    <property type="entry name" value="KH_2"/>
    <property type="match status" value="1"/>
</dbReference>
<dbReference type="Pfam" id="PF00189">
    <property type="entry name" value="Ribosomal_S3_C"/>
    <property type="match status" value="1"/>
</dbReference>
<dbReference type="SMART" id="SM00322">
    <property type="entry name" value="KH"/>
    <property type="match status" value="1"/>
</dbReference>
<dbReference type="SUPFAM" id="SSF54814">
    <property type="entry name" value="Prokaryotic type KH domain (KH-domain type II)"/>
    <property type="match status" value="1"/>
</dbReference>
<dbReference type="SUPFAM" id="SSF54821">
    <property type="entry name" value="Ribosomal protein S3 C-terminal domain"/>
    <property type="match status" value="1"/>
</dbReference>
<dbReference type="PROSITE" id="PS50823">
    <property type="entry name" value="KH_TYPE_2"/>
    <property type="match status" value="1"/>
</dbReference>
<dbReference type="PROSITE" id="PS00548">
    <property type="entry name" value="RIBOSOMAL_S3"/>
    <property type="match status" value="1"/>
</dbReference>